<reference key="1">
    <citation type="journal article" date="2006" name="Nature">
        <title>The finished DNA sequence of human chromosome 12.</title>
        <authorList>
            <person name="Scherer S.E."/>
            <person name="Muzny D.M."/>
            <person name="Buhay C.J."/>
            <person name="Chen R."/>
            <person name="Cree A."/>
            <person name="Ding Y."/>
            <person name="Dugan-Rocha S."/>
            <person name="Gill R."/>
            <person name="Gunaratne P."/>
            <person name="Harris R.A."/>
            <person name="Hawes A.C."/>
            <person name="Hernandez J."/>
            <person name="Hodgson A.V."/>
            <person name="Hume J."/>
            <person name="Jackson A."/>
            <person name="Khan Z.M."/>
            <person name="Kovar-Smith C."/>
            <person name="Lewis L.R."/>
            <person name="Lozado R.J."/>
            <person name="Metzker M.L."/>
            <person name="Milosavljevic A."/>
            <person name="Miner G.R."/>
            <person name="Montgomery K.T."/>
            <person name="Morgan M.B."/>
            <person name="Nazareth L.V."/>
            <person name="Scott G."/>
            <person name="Sodergren E."/>
            <person name="Song X.-Z."/>
            <person name="Steffen D."/>
            <person name="Lovering R.C."/>
            <person name="Wheeler D.A."/>
            <person name="Worley K.C."/>
            <person name="Yuan Y."/>
            <person name="Zhang Z."/>
            <person name="Adams C.Q."/>
            <person name="Ansari-Lari M.A."/>
            <person name="Ayele M."/>
            <person name="Brown M.J."/>
            <person name="Chen G."/>
            <person name="Chen Z."/>
            <person name="Clerc-Blankenburg K.P."/>
            <person name="Davis C."/>
            <person name="Delgado O."/>
            <person name="Dinh H.H."/>
            <person name="Draper H."/>
            <person name="Gonzalez-Garay M.L."/>
            <person name="Havlak P."/>
            <person name="Jackson L.R."/>
            <person name="Jacob L.S."/>
            <person name="Kelly S.H."/>
            <person name="Li L."/>
            <person name="Li Z."/>
            <person name="Liu J."/>
            <person name="Liu W."/>
            <person name="Lu J."/>
            <person name="Maheshwari M."/>
            <person name="Nguyen B.-V."/>
            <person name="Okwuonu G.O."/>
            <person name="Pasternak S."/>
            <person name="Perez L.M."/>
            <person name="Plopper F.J.H."/>
            <person name="Santibanez J."/>
            <person name="Shen H."/>
            <person name="Tabor P.E."/>
            <person name="Verduzco D."/>
            <person name="Waldron L."/>
            <person name="Wang Q."/>
            <person name="Williams G.A."/>
            <person name="Zhang J."/>
            <person name="Zhou J."/>
            <person name="Allen C.C."/>
            <person name="Amin A.G."/>
            <person name="Anyalebechi V."/>
            <person name="Bailey M."/>
            <person name="Barbaria J.A."/>
            <person name="Bimage K.E."/>
            <person name="Bryant N.P."/>
            <person name="Burch P.E."/>
            <person name="Burkett C.E."/>
            <person name="Burrell K.L."/>
            <person name="Calderon E."/>
            <person name="Cardenas V."/>
            <person name="Carter K."/>
            <person name="Casias K."/>
            <person name="Cavazos I."/>
            <person name="Cavazos S.R."/>
            <person name="Ceasar H."/>
            <person name="Chacko J."/>
            <person name="Chan S.N."/>
            <person name="Chavez D."/>
            <person name="Christopoulos C."/>
            <person name="Chu J."/>
            <person name="Cockrell R."/>
            <person name="Cox C.D."/>
            <person name="Dang M."/>
            <person name="Dathorne S.R."/>
            <person name="David R."/>
            <person name="Davis C.M."/>
            <person name="Davy-Carroll L."/>
            <person name="Deshazo D.R."/>
            <person name="Donlin J.E."/>
            <person name="D'Souza L."/>
            <person name="Eaves K.A."/>
            <person name="Egan A."/>
            <person name="Emery-Cohen A.J."/>
            <person name="Escotto M."/>
            <person name="Flagg N."/>
            <person name="Forbes L.D."/>
            <person name="Gabisi A.M."/>
            <person name="Garza M."/>
            <person name="Hamilton C."/>
            <person name="Henderson N."/>
            <person name="Hernandez O."/>
            <person name="Hines S."/>
            <person name="Hogues M.E."/>
            <person name="Huang M."/>
            <person name="Idlebird D.G."/>
            <person name="Johnson R."/>
            <person name="Jolivet A."/>
            <person name="Jones S."/>
            <person name="Kagan R."/>
            <person name="King L.M."/>
            <person name="Leal B."/>
            <person name="Lebow H."/>
            <person name="Lee S."/>
            <person name="LeVan J.M."/>
            <person name="Lewis L.C."/>
            <person name="London P."/>
            <person name="Lorensuhewa L.M."/>
            <person name="Loulseged H."/>
            <person name="Lovett D.A."/>
            <person name="Lucier A."/>
            <person name="Lucier R.L."/>
            <person name="Ma J."/>
            <person name="Madu R.C."/>
            <person name="Mapua P."/>
            <person name="Martindale A.D."/>
            <person name="Martinez E."/>
            <person name="Massey E."/>
            <person name="Mawhiney S."/>
            <person name="Meador M.G."/>
            <person name="Mendez S."/>
            <person name="Mercado C."/>
            <person name="Mercado I.C."/>
            <person name="Merritt C.E."/>
            <person name="Miner Z.L."/>
            <person name="Minja E."/>
            <person name="Mitchell T."/>
            <person name="Mohabbat F."/>
            <person name="Mohabbat K."/>
            <person name="Montgomery B."/>
            <person name="Moore N."/>
            <person name="Morris S."/>
            <person name="Munidasa M."/>
            <person name="Ngo R.N."/>
            <person name="Nguyen N.B."/>
            <person name="Nickerson E."/>
            <person name="Nwaokelemeh O.O."/>
            <person name="Nwokenkwo S."/>
            <person name="Obregon M."/>
            <person name="Oguh M."/>
            <person name="Oragunye N."/>
            <person name="Oviedo R.J."/>
            <person name="Parish B.J."/>
            <person name="Parker D.N."/>
            <person name="Parrish J."/>
            <person name="Parks K.L."/>
            <person name="Paul H.A."/>
            <person name="Payton B.A."/>
            <person name="Perez A."/>
            <person name="Perrin W."/>
            <person name="Pickens A."/>
            <person name="Primus E.L."/>
            <person name="Pu L.-L."/>
            <person name="Puazo M."/>
            <person name="Quiles M.M."/>
            <person name="Quiroz J.B."/>
            <person name="Rabata D."/>
            <person name="Reeves K."/>
            <person name="Ruiz S.J."/>
            <person name="Shao H."/>
            <person name="Sisson I."/>
            <person name="Sonaike T."/>
            <person name="Sorelle R.P."/>
            <person name="Sutton A.E."/>
            <person name="Svatek A.F."/>
            <person name="Svetz L.A."/>
            <person name="Tamerisa K.S."/>
            <person name="Taylor T.R."/>
            <person name="Teague B."/>
            <person name="Thomas N."/>
            <person name="Thorn R.D."/>
            <person name="Trejos Z.Y."/>
            <person name="Trevino B.K."/>
            <person name="Ukegbu O.N."/>
            <person name="Urban J.B."/>
            <person name="Vasquez L.I."/>
            <person name="Vera V.A."/>
            <person name="Villasana D.M."/>
            <person name="Wang L."/>
            <person name="Ward-Moore S."/>
            <person name="Warren J.T."/>
            <person name="Wei X."/>
            <person name="White F."/>
            <person name="Williamson A.L."/>
            <person name="Wleczyk R."/>
            <person name="Wooden H.S."/>
            <person name="Wooden S.H."/>
            <person name="Yen J."/>
            <person name="Yoon L."/>
            <person name="Yoon V."/>
            <person name="Zorrilla S.E."/>
            <person name="Nelson D."/>
            <person name="Kucherlapati R."/>
            <person name="Weinstock G."/>
            <person name="Gibbs R.A."/>
        </authorList>
    </citation>
    <scope>NUCLEOTIDE SEQUENCE [LARGE SCALE GENOMIC DNA]</scope>
</reference>
<reference key="2">
    <citation type="submission" date="2005-07" db="EMBL/GenBank/DDBJ databases">
        <authorList>
            <person name="Mural R.J."/>
            <person name="Istrail S."/>
            <person name="Sutton G.G."/>
            <person name="Florea L."/>
            <person name="Halpern A.L."/>
            <person name="Mobarry C.M."/>
            <person name="Lippert R."/>
            <person name="Walenz B."/>
            <person name="Shatkay H."/>
            <person name="Dew I."/>
            <person name="Miller J.R."/>
            <person name="Flanigan M.J."/>
            <person name="Edwards N.J."/>
            <person name="Bolanos R."/>
            <person name="Fasulo D."/>
            <person name="Halldorsson B.V."/>
            <person name="Hannenhalli S."/>
            <person name="Turner R."/>
            <person name="Yooseph S."/>
            <person name="Lu F."/>
            <person name="Nusskern D.R."/>
            <person name="Shue B.C."/>
            <person name="Zheng X.H."/>
            <person name="Zhong F."/>
            <person name="Delcher A.L."/>
            <person name="Huson D.H."/>
            <person name="Kravitz S.A."/>
            <person name="Mouchard L."/>
            <person name="Reinert K."/>
            <person name="Remington K.A."/>
            <person name="Clark A.G."/>
            <person name="Waterman M.S."/>
            <person name="Eichler E.E."/>
            <person name="Adams M.D."/>
            <person name="Hunkapiller M.W."/>
            <person name="Myers E.W."/>
            <person name="Venter J.C."/>
        </authorList>
    </citation>
    <scope>NUCLEOTIDE SEQUENCE [LARGE SCALE GENOMIC DNA]</scope>
</reference>
<reference key="3">
    <citation type="journal article" date="2004" name="Genome Res.">
        <title>The status, quality, and expansion of the NIH full-length cDNA project: the Mammalian Gene Collection (MGC).</title>
        <authorList>
            <consortium name="The MGC Project Team"/>
        </authorList>
    </citation>
    <scope>NUCLEOTIDE SEQUENCE [LARGE SCALE MRNA]</scope>
    <source>
        <tissue>PNS</tissue>
        <tissue>Skeletal muscle</tissue>
    </source>
</reference>
<reference key="4">
    <citation type="journal article" date="2016" name="Mol. Cell">
        <title>Mitochondrial protein interaction mapping identifies regulators of respiratory chain function.</title>
        <authorList>
            <person name="Floyd B.J."/>
            <person name="Wilkerson E.M."/>
            <person name="Veling M.T."/>
            <person name="Minogue C.E."/>
            <person name="Xia C."/>
            <person name="Beebe E.T."/>
            <person name="Wrobel R.L."/>
            <person name="Cho H."/>
            <person name="Kremer L.S."/>
            <person name="Alston C.L."/>
            <person name="Gromek K.A."/>
            <person name="Dolan B.K."/>
            <person name="Ulbrich A."/>
            <person name="Stefely J.A."/>
            <person name="Bohl S.L."/>
            <person name="Werner K.M."/>
            <person name="Jochem A."/>
            <person name="Westphall M.S."/>
            <person name="Rensvold J.W."/>
            <person name="Taylor R.W."/>
            <person name="Prokisch H."/>
            <person name="Kim J.J."/>
            <person name="Coon J.J."/>
            <person name="Pagliarini D.J."/>
        </authorList>
    </citation>
    <scope>FUNCTION</scope>
    <scope>SUBCELLULAR LOCATION</scope>
    <scope>SUBUNIT</scope>
    <scope>INTERACTION WITH NDUFAB1; ETFA AND ETFB</scope>
</reference>
<comment type="function">
    <text evidence="1">Acts as a regulator of the electron transfer flavoprotein by promoting the removal of flavin from the ETF holoenzyme (composed of ETFA and ETFB).</text>
</comment>
<comment type="subunit">
    <text evidence="1 3">homotetramer (Probable). Interacts with NDUFAB1 (PubMed:27499296). Interacts with ETFA (PubMed:27499296). Interacts with ETFB (PubMed:27499296).</text>
</comment>
<comment type="interaction">
    <interactant intactId="EBI-12292149">
        <id>Q6IPR1</id>
    </interactant>
    <interactant intactId="EBI-11522760">
        <id>Q6RW13-2</id>
        <label>AGTRAP</label>
    </interactant>
    <organismsDiffer>false</organismsDiffer>
    <experiments>3</experiments>
</comment>
<comment type="interaction">
    <interactant intactId="EBI-12292149">
        <id>Q6IPR1</id>
    </interactant>
    <interactant intactId="EBI-1056543">
        <id>P38117</id>
        <label>ETFB</label>
    </interactant>
    <organismsDiffer>false</organismsDiffer>
    <experiments>9</experiments>
</comment>
<comment type="interaction">
    <interactant intactId="EBI-12292149">
        <id>Q6IPR1</id>
    </interactant>
    <interactant intactId="EBI-1055254">
        <id>Q8WXH2</id>
        <label>JPH3</label>
    </interactant>
    <organismsDiffer>false</organismsDiffer>
    <experiments>3</experiments>
</comment>
<comment type="subcellular location">
    <subcellularLocation>
        <location evidence="1">Mitochondrion</location>
    </subcellularLocation>
</comment>
<comment type="similarity">
    <text evidence="2">Belongs to the complex I LYR family.</text>
</comment>
<comment type="sequence caution" evidence="2">
    <conflict type="erroneous initiation">
        <sequence resource="EMBL-CDS" id="AAH71769"/>
    </conflict>
    <text>Truncated N-terminus.</text>
</comment>
<comment type="sequence caution" evidence="2">
    <conflict type="erroneous initiation">
        <sequence resource="EMBL-CDS" id="AAI00277"/>
    </conflict>
    <text>Truncated N-terminus.</text>
</comment>
<keyword id="KW-0496">Mitochondrion</keyword>
<keyword id="KW-1267">Proteomics identification</keyword>
<keyword id="KW-1185">Reference proteome</keyword>
<name>ETFR1_HUMAN</name>
<sequence>MKMANSLRGEVLKLYKNLLYLGRDYPKGADYFKKRLKNIFLKNKDVKNPEKIKELIAQGEFVMKELEALYFLRKYRAMKQRYYSDTNKTN</sequence>
<proteinExistence type="evidence at protein level"/>
<dbReference type="EMBL" id="AC092794">
    <property type="status" value="NOT_ANNOTATED_CDS"/>
    <property type="molecule type" value="Genomic_DNA"/>
</dbReference>
<dbReference type="EMBL" id="CH471094">
    <property type="protein sequence ID" value="EAW96510.1"/>
    <property type="molecule type" value="Genomic_DNA"/>
</dbReference>
<dbReference type="EMBL" id="BC071769">
    <property type="protein sequence ID" value="AAH71769.1"/>
    <property type="status" value="ALT_INIT"/>
    <property type="molecule type" value="mRNA"/>
</dbReference>
<dbReference type="EMBL" id="BC100276">
    <property type="protein sequence ID" value="AAI00277.1"/>
    <property type="status" value="ALT_INIT"/>
    <property type="molecule type" value="mRNA"/>
</dbReference>
<dbReference type="CCDS" id="CCDS53764.1"/>
<dbReference type="RefSeq" id="NP_001001660.2">
    <property type="nucleotide sequence ID" value="NM_001001660.3"/>
</dbReference>
<dbReference type="RefSeq" id="XP_005253376.1">
    <property type="nucleotide sequence ID" value="XM_005253319.5"/>
</dbReference>
<dbReference type="RefSeq" id="XP_005253377.1">
    <property type="nucleotide sequence ID" value="XM_005253320.5"/>
</dbReference>
<dbReference type="RefSeq" id="XP_016874339.1">
    <property type="nucleotide sequence ID" value="XM_017018850.3"/>
</dbReference>
<dbReference type="RefSeq" id="XP_054227144.1">
    <property type="nucleotide sequence ID" value="XM_054371169.1"/>
</dbReference>
<dbReference type="RefSeq" id="XP_054227145.1">
    <property type="nucleotide sequence ID" value="XM_054371170.1"/>
</dbReference>
<dbReference type="SMR" id="Q6IPR1"/>
<dbReference type="BioGRID" id="126846">
    <property type="interactions" value="24"/>
</dbReference>
<dbReference type="FunCoup" id="Q6IPR1">
    <property type="interactions" value="760"/>
</dbReference>
<dbReference type="IntAct" id="Q6IPR1">
    <property type="interactions" value="24"/>
</dbReference>
<dbReference type="STRING" id="9606.ENSP00000450584"/>
<dbReference type="iPTMnet" id="Q6IPR1"/>
<dbReference type="PhosphoSitePlus" id="Q6IPR1"/>
<dbReference type="BioMuta" id="ETFRF1"/>
<dbReference type="DMDM" id="519668671"/>
<dbReference type="jPOST" id="Q6IPR1"/>
<dbReference type="MassIVE" id="Q6IPR1"/>
<dbReference type="PaxDb" id="9606-ENSP00000370761"/>
<dbReference type="PeptideAtlas" id="Q6IPR1"/>
<dbReference type="ProteomicsDB" id="66455"/>
<dbReference type="Pumba" id="Q6IPR1"/>
<dbReference type="TopDownProteomics" id="Q6IPR1"/>
<dbReference type="Antibodypedia" id="48706">
    <property type="antibodies" value="35 antibodies from 11 providers"/>
</dbReference>
<dbReference type="DNASU" id="144363"/>
<dbReference type="Ensembl" id="ENST00000381356.9">
    <property type="protein sequence ID" value="ENSP00000370761.4"/>
    <property type="gene ID" value="ENSG00000205707.11"/>
</dbReference>
<dbReference type="Ensembl" id="ENST00000556351.6">
    <property type="protein sequence ID" value="ENSP00000452146.2"/>
    <property type="gene ID" value="ENSG00000205707.11"/>
</dbReference>
<dbReference type="Ensembl" id="ENST00000556927.6">
    <property type="protein sequence ID" value="ENSP00000450443.2"/>
    <property type="gene ID" value="ENSG00000205707.11"/>
</dbReference>
<dbReference type="Ensembl" id="ENST00000557540.7">
    <property type="protein sequence ID" value="ENSP00000450584.2"/>
    <property type="gene ID" value="ENSG00000205707.11"/>
</dbReference>
<dbReference type="GeneID" id="144363"/>
<dbReference type="KEGG" id="hsa:144363"/>
<dbReference type="MANE-Select" id="ENST00000381356.9">
    <property type="protein sequence ID" value="ENSP00000370761.4"/>
    <property type="RefSeq nucleotide sequence ID" value="NM_001001660.3"/>
    <property type="RefSeq protein sequence ID" value="NP_001001660.2"/>
</dbReference>
<dbReference type="UCSC" id="uc001rgn.4">
    <property type="organism name" value="human"/>
</dbReference>
<dbReference type="AGR" id="HGNC:27052"/>
<dbReference type="CTD" id="144363"/>
<dbReference type="GeneCards" id="ETFRF1"/>
<dbReference type="HGNC" id="HGNC:27052">
    <property type="gene designation" value="ETFRF1"/>
</dbReference>
<dbReference type="HPA" id="ENSG00000205707">
    <property type="expression patterns" value="Low tissue specificity"/>
</dbReference>
<dbReference type="neXtProt" id="NX_Q6IPR1"/>
<dbReference type="OpenTargets" id="ENSG00000205707"/>
<dbReference type="PharmGKB" id="PA162394773"/>
<dbReference type="VEuPathDB" id="HostDB:ENSG00000205707"/>
<dbReference type="eggNOG" id="ENOG502S4S4">
    <property type="taxonomic scope" value="Eukaryota"/>
</dbReference>
<dbReference type="GeneTree" id="ENSGT00390000001810"/>
<dbReference type="InParanoid" id="Q6IPR1"/>
<dbReference type="OMA" id="HRAFMSK"/>
<dbReference type="OrthoDB" id="10258445at2759"/>
<dbReference type="PAN-GO" id="Q6IPR1">
    <property type="GO annotations" value="2 GO annotations based on evolutionary models"/>
</dbReference>
<dbReference type="PhylomeDB" id="Q6IPR1"/>
<dbReference type="TreeFam" id="TF300251"/>
<dbReference type="PathwayCommons" id="Q6IPR1"/>
<dbReference type="SignaLink" id="Q6IPR1"/>
<dbReference type="BioGRID-ORCS" id="144363">
    <property type="hits" value="95 hits in 1009 CRISPR screens"/>
</dbReference>
<dbReference type="ChiTaRS" id="ETFRF1">
    <property type="organism name" value="human"/>
</dbReference>
<dbReference type="GenomeRNAi" id="144363"/>
<dbReference type="Pharos" id="Q6IPR1">
    <property type="development level" value="Tdark"/>
</dbReference>
<dbReference type="PRO" id="PR:Q6IPR1"/>
<dbReference type="Proteomes" id="UP000005640">
    <property type="component" value="Chromosome 12"/>
</dbReference>
<dbReference type="RNAct" id="Q6IPR1">
    <property type="molecule type" value="protein"/>
</dbReference>
<dbReference type="Bgee" id="ENSG00000205707">
    <property type="expression patterns" value="Expressed in left ventricle myocardium and 192 other cell types or tissues"/>
</dbReference>
<dbReference type="ExpressionAtlas" id="Q6IPR1">
    <property type="expression patterns" value="baseline and differential"/>
</dbReference>
<dbReference type="GO" id="GO:0005739">
    <property type="term" value="C:mitochondrion"/>
    <property type="evidence" value="ECO:0000314"/>
    <property type="project" value="UniProtKB"/>
</dbReference>
<dbReference type="GO" id="GO:0004857">
    <property type="term" value="F:enzyme inhibitor activity"/>
    <property type="evidence" value="ECO:0000314"/>
    <property type="project" value="FlyBase"/>
</dbReference>
<dbReference type="GO" id="GO:0090324">
    <property type="term" value="P:negative regulation of oxidative phosphorylation"/>
    <property type="evidence" value="ECO:0007669"/>
    <property type="project" value="InterPro"/>
</dbReference>
<dbReference type="GO" id="GO:0022904">
    <property type="term" value="P:respiratory electron transport chain"/>
    <property type="evidence" value="ECO:0000315"/>
    <property type="project" value="UniProtKB"/>
</dbReference>
<dbReference type="CDD" id="cd20265">
    <property type="entry name" value="Complex1_LYR_ETFRF1_LYRM5"/>
    <property type="match status" value="1"/>
</dbReference>
<dbReference type="InterPro" id="IPR008011">
    <property type="entry name" value="Complex1_LYR_dom"/>
</dbReference>
<dbReference type="InterPro" id="IPR045296">
    <property type="entry name" value="Complex1_LYR_ETFRF1_LYRM5"/>
</dbReference>
<dbReference type="InterPro" id="IPR052000">
    <property type="entry name" value="ETFRF1"/>
</dbReference>
<dbReference type="PANTHER" id="PTHR21024:SF0">
    <property type="entry name" value="ELECTRON TRANSFER FLAVOPROTEIN REGULATORY FACTOR 1"/>
    <property type="match status" value="1"/>
</dbReference>
<dbReference type="PANTHER" id="PTHR21024">
    <property type="entry name" value="GROWTH HORMONE-INDUCIBLE SOLUBLE PROTEIN-RELATED"/>
    <property type="match status" value="1"/>
</dbReference>
<dbReference type="Pfam" id="PF05347">
    <property type="entry name" value="Complex1_LYR"/>
    <property type="match status" value="1"/>
</dbReference>
<accession>Q6IPR1</accession>
<accession>J3KPI7</accession>
<feature type="chain" id="PRO_0000251182" description="Electron transfer flavoprotein regulatory factor 1">
    <location>
        <begin position="1"/>
        <end position="90"/>
    </location>
</feature>
<protein>
    <recommendedName>
        <fullName evidence="4">Electron transfer flavoprotein regulatory factor 1</fullName>
    </recommendedName>
    <alternativeName>
        <fullName evidence="4">LYR motif-containing protein 5</fullName>
    </alternativeName>
</protein>
<gene>
    <name evidence="4" type="primary">ETFRF1</name>
    <name evidence="4" type="synonym">LYRM5</name>
</gene>
<organism>
    <name type="scientific">Homo sapiens</name>
    <name type="common">Human</name>
    <dbReference type="NCBI Taxonomy" id="9606"/>
    <lineage>
        <taxon>Eukaryota</taxon>
        <taxon>Metazoa</taxon>
        <taxon>Chordata</taxon>
        <taxon>Craniata</taxon>
        <taxon>Vertebrata</taxon>
        <taxon>Euteleostomi</taxon>
        <taxon>Mammalia</taxon>
        <taxon>Eutheria</taxon>
        <taxon>Euarchontoglires</taxon>
        <taxon>Primates</taxon>
        <taxon>Haplorrhini</taxon>
        <taxon>Catarrhini</taxon>
        <taxon>Hominidae</taxon>
        <taxon>Homo</taxon>
    </lineage>
</organism>
<evidence type="ECO:0000269" key="1">
    <source>
    </source>
</evidence>
<evidence type="ECO:0000305" key="2"/>
<evidence type="ECO:0000305" key="3">
    <source>
    </source>
</evidence>
<evidence type="ECO:0000312" key="4">
    <source>
        <dbReference type="HGNC" id="HGNC:27052"/>
    </source>
</evidence>